<name>PA2HB_BOTLC</name>
<dbReference type="SMR" id="P86975"/>
<dbReference type="GO" id="GO:0005576">
    <property type="term" value="C:extracellular region"/>
    <property type="evidence" value="ECO:0007669"/>
    <property type="project" value="UniProtKB-SubCell"/>
</dbReference>
<dbReference type="GO" id="GO:0005509">
    <property type="term" value="F:calcium ion binding"/>
    <property type="evidence" value="ECO:0007669"/>
    <property type="project" value="InterPro"/>
</dbReference>
<dbReference type="GO" id="GO:0047498">
    <property type="term" value="F:calcium-dependent phospholipase A2 activity"/>
    <property type="evidence" value="ECO:0007669"/>
    <property type="project" value="TreeGrafter"/>
</dbReference>
<dbReference type="GO" id="GO:0005543">
    <property type="term" value="F:phospholipid binding"/>
    <property type="evidence" value="ECO:0007669"/>
    <property type="project" value="TreeGrafter"/>
</dbReference>
<dbReference type="GO" id="GO:0090729">
    <property type="term" value="F:toxin activity"/>
    <property type="evidence" value="ECO:0007669"/>
    <property type="project" value="UniProtKB-KW"/>
</dbReference>
<dbReference type="GO" id="GO:0050482">
    <property type="term" value="P:arachidonate secretion"/>
    <property type="evidence" value="ECO:0007669"/>
    <property type="project" value="InterPro"/>
</dbReference>
<dbReference type="GO" id="GO:0016042">
    <property type="term" value="P:lipid catabolic process"/>
    <property type="evidence" value="ECO:0007669"/>
    <property type="project" value="InterPro"/>
</dbReference>
<dbReference type="GO" id="GO:0042130">
    <property type="term" value="P:negative regulation of T cell proliferation"/>
    <property type="evidence" value="ECO:0007669"/>
    <property type="project" value="TreeGrafter"/>
</dbReference>
<dbReference type="GO" id="GO:0006644">
    <property type="term" value="P:phospholipid metabolic process"/>
    <property type="evidence" value="ECO:0007669"/>
    <property type="project" value="InterPro"/>
</dbReference>
<dbReference type="CDD" id="cd00125">
    <property type="entry name" value="PLA2c"/>
    <property type="match status" value="1"/>
</dbReference>
<dbReference type="FunFam" id="1.20.90.10:FF:000001">
    <property type="entry name" value="Basic phospholipase A2 homolog"/>
    <property type="match status" value="1"/>
</dbReference>
<dbReference type="Gene3D" id="1.20.90.10">
    <property type="entry name" value="Phospholipase A2 domain"/>
    <property type="match status" value="1"/>
</dbReference>
<dbReference type="InterPro" id="IPR001211">
    <property type="entry name" value="PLipase_A2"/>
</dbReference>
<dbReference type="InterPro" id="IPR033112">
    <property type="entry name" value="PLipase_A2_Asp_AS"/>
</dbReference>
<dbReference type="InterPro" id="IPR016090">
    <property type="entry name" value="PLipase_A2_dom"/>
</dbReference>
<dbReference type="InterPro" id="IPR036444">
    <property type="entry name" value="PLipase_A2_dom_sf"/>
</dbReference>
<dbReference type="InterPro" id="IPR033113">
    <property type="entry name" value="PLipase_A2_His_AS"/>
</dbReference>
<dbReference type="PANTHER" id="PTHR11716">
    <property type="entry name" value="PHOSPHOLIPASE A2 FAMILY MEMBER"/>
    <property type="match status" value="1"/>
</dbReference>
<dbReference type="PANTHER" id="PTHR11716:SF9">
    <property type="entry name" value="PHOSPHOLIPASE A2, MEMBRANE ASSOCIATED"/>
    <property type="match status" value="1"/>
</dbReference>
<dbReference type="Pfam" id="PF00068">
    <property type="entry name" value="Phospholip_A2_1"/>
    <property type="match status" value="1"/>
</dbReference>
<dbReference type="PRINTS" id="PR00389">
    <property type="entry name" value="PHPHLIPASEA2"/>
</dbReference>
<dbReference type="SMART" id="SM00085">
    <property type="entry name" value="PA2c"/>
    <property type="match status" value="1"/>
</dbReference>
<dbReference type="SUPFAM" id="SSF48619">
    <property type="entry name" value="Phospholipase A2, PLA2"/>
    <property type="match status" value="1"/>
</dbReference>
<dbReference type="PROSITE" id="PS00119">
    <property type="entry name" value="PA2_ASP"/>
    <property type="match status" value="1"/>
</dbReference>
<dbReference type="PROSITE" id="PS00118">
    <property type="entry name" value="PA2_HIS"/>
    <property type="match status" value="1"/>
</dbReference>
<reference key="1">
    <citation type="submission" date="2011-06" db="UniProtKB">
        <authorList>
            <person name="Sanchez E.F."/>
        </authorList>
    </citation>
    <scope>PROTEIN SEQUENCE</scope>
    <scope>SUBCELLULAR LOCATION</scope>
    <source>
        <tissue>Venom</tissue>
    </source>
</reference>
<reference key="2">
    <citation type="journal article" date="2007" name="Biochimie">
        <title>Purification and partial characterization of two phospholipases A2 from Bothrops leucurus (white-tailed-jararaca) snake venom.</title>
        <authorList>
            <person name="Higuchi D.A."/>
            <person name="Barbosa C.M."/>
            <person name="Bincoletto C."/>
            <person name="Chagas J.R."/>
            <person name="Magalhaes A."/>
            <person name="Richardson M."/>
            <person name="Sanchez E.F."/>
            <person name="Pesquero J.B."/>
            <person name="Araujo R.C."/>
            <person name="Pesquero J.L."/>
        </authorList>
    </citation>
    <scope>PROTEIN SEQUENCE OF 1-48</scope>
    <scope>FUNCTION</scope>
    <scope>SUBCELLULAR LOCATION</scope>
    <source>
        <tissue>Venom</tissue>
    </source>
</reference>
<sequence length="121" mass="13717">SLFELGKMILQETGKNSVKSYGVYGCNCGVGGRGKPKDATDRCCYVHKCCYKKLTGCDPKKDRYSYSWKDKTIVCGENNPCLKELCECDKAVAICLRENLGTYNKKYRYHLKPFCKKADPC</sequence>
<evidence type="ECO:0000250" key="1">
    <source>
        <dbReference type="UniProtKB" id="I6L8L6"/>
    </source>
</evidence>
<evidence type="ECO:0000250" key="2">
    <source>
        <dbReference type="UniProtKB" id="P24605"/>
    </source>
</evidence>
<evidence type="ECO:0000250" key="3">
    <source>
        <dbReference type="UniProtKB" id="P82287"/>
    </source>
</evidence>
<evidence type="ECO:0000250" key="4">
    <source>
        <dbReference type="UniProtKB" id="Q90249"/>
    </source>
</evidence>
<evidence type="ECO:0000269" key="5">
    <source>
    </source>
</evidence>
<evidence type="ECO:0000269" key="6">
    <source ref="1"/>
</evidence>
<evidence type="ECO:0000303" key="7">
    <source>
    </source>
</evidence>
<evidence type="ECO:0000305" key="8"/>
<evidence type="ECO:0000305" key="9">
    <source>
    </source>
</evidence>
<evidence type="ECO:0000305" key="10">
    <source ref="1"/>
</evidence>
<keyword id="KW-0903">Direct protein sequencing</keyword>
<keyword id="KW-1015">Disulfide bond</keyword>
<keyword id="KW-0959">Myotoxin</keyword>
<keyword id="KW-0964">Secreted</keyword>
<keyword id="KW-0800">Toxin</keyword>
<feature type="chain" id="PRO_0000413007" description="Basic phospholipase A2 homolog blK-PLA2">
    <location>
        <begin position="1"/>
        <end position="121"/>
    </location>
</feature>
<feature type="region of interest" description="Important for membrane-damaging activities in eukaryotes and bacteria; heparin-binding" evidence="2">
    <location>
        <begin position="105"/>
        <end position="117"/>
    </location>
</feature>
<feature type="site" description="Important residue of the cationic membrane-docking site (MDoS)" evidence="1">
    <location>
        <position position="105"/>
    </location>
</feature>
<feature type="site" description="Important residue of the cationic membrane-docking site (MDoS)" evidence="1">
    <location>
        <position position="108"/>
    </location>
</feature>
<feature type="site" description="Hydrophobic membrane-disruption site (MDiS)" evidence="1">
    <location>
        <position position="111"/>
    </location>
</feature>
<feature type="site" description="Cationic membrane-docking site (MDoS)" evidence="1">
    <location>
        <position position="112"/>
    </location>
</feature>
<feature type="site" description="Hydrophobic membrane-disruption site (MDiS)" evidence="1">
    <location>
        <position position="114"/>
    </location>
</feature>
<feature type="site" description="Cationic membrane-docking site (MDoS)" evidence="1">
    <location>
        <position position="117"/>
    </location>
</feature>
<feature type="disulfide bond" evidence="4">
    <location>
        <begin position="26"/>
        <end position="115"/>
    </location>
</feature>
<feature type="disulfide bond" evidence="4">
    <location>
        <begin position="28"/>
        <end position="44"/>
    </location>
</feature>
<feature type="disulfide bond" evidence="4">
    <location>
        <begin position="43"/>
        <end position="95"/>
    </location>
</feature>
<feature type="disulfide bond" evidence="4">
    <location>
        <begin position="49"/>
        <end position="121"/>
    </location>
</feature>
<feature type="disulfide bond" evidence="4">
    <location>
        <begin position="50"/>
        <end position="88"/>
    </location>
</feature>
<feature type="disulfide bond" evidence="4">
    <location>
        <begin position="57"/>
        <end position="81"/>
    </location>
</feature>
<feature type="disulfide bond" evidence="4">
    <location>
        <begin position="75"/>
        <end position="86"/>
    </location>
</feature>
<protein>
    <recommendedName>
        <fullName evidence="7">Basic phospholipase A2 homolog blK-PLA2</fullName>
        <shortName>svPLA2 homolog</shortName>
    </recommendedName>
</protein>
<accession>P86975</accession>
<comment type="function">
    <text evidence="1 3">Snake venom phospholipase A2 (PLA2) homolog that lacks enzymatic activity (By similarity). Shows myotoxic and edema-inducing activities in vivo (By similarity). A model of myotoxic mechanism has been proposed: an apo Lys49-PLA2 is activated by the entrance of a hydrophobic molecule (e.g. fatty acid) at the hydrophobic channel of the protein leading to a reorientation of a monomer (By similarity). This reorientation causes a transition between 'inactive' to 'active' states, causing alignment of C-terminal and membrane-docking sites (MDoS) side-by-side and putting the membrane-disruption sites (MDiS) in the same plane, exposed to solvent and in a symmetric position for both monomers (By similarity). The MDoS region stabilizes the toxin on membrane by the interaction of charged residues with phospholipid head groups (By similarity). Subsequently, the MDiS region destabilizes the membrane with penetration of hydrophobic residues (By similarity). This insertion causes a disorganization of the membrane, allowing an uncontrolled influx of ions (i.e. calcium and sodium), and eventually triggering irreversible intracellular alterations and cell death (By similarity).</text>
</comment>
<comment type="subunit">
    <text evidence="4">Homodimer; non-covalently linked.</text>
</comment>
<comment type="subcellular location">
    <subcellularLocation>
        <location evidence="5 6">Secreted</location>
    </subcellularLocation>
</comment>
<comment type="tissue specificity">
    <text evidence="9 10">Expressed by the venom gland.</text>
</comment>
<comment type="similarity">
    <text evidence="8">Belongs to the phospholipase A2 family. Group II subfamily. K49 sub-subfamily.</text>
</comment>
<comment type="caution">
    <text evidence="8">Does not bind calcium as one of the calcium-binding sites is lost (Asp-&gt;Lys in position 48, which corresponds to 'Lys-49' in the current nomenclature).</text>
</comment>
<organism>
    <name type="scientific">Bothrops leucurus</name>
    <name type="common">Whitetail lancehead</name>
    <dbReference type="NCBI Taxonomy" id="157295"/>
    <lineage>
        <taxon>Eukaryota</taxon>
        <taxon>Metazoa</taxon>
        <taxon>Chordata</taxon>
        <taxon>Craniata</taxon>
        <taxon>Vertebrata</taxon>
        <taxon>Euteleostomi</taxon>
        <taxon>Lepidosauria</taxon>
        <taxon>Squamata</taxon>
        <taxon>Bifurcata</taxon>
        <taxon>Unidentata</taxon>
        <taxon>Episquamata</taxon>
        <taxon>Toxicofera</taxon>
        <taxon>Serpentes</taxon>
        <taxon>Colubroidea</taxon>
        <taxon>Viperidae</taxon>
        <taxon>Crotalinae</taxon>
        <taxon>Bothrops</taxon>
    </lineage>
</organism>
<proteinExistence type="evidence at protein level"/>